<name>MIH_PENJP</name>
<dbReference type="EMBL" id="AB004652">
    <property type="protein sequence ID" value="BAA20432.1"/>
    <property type="molecule type" value="mRNA"/>
</dbReference>
<dbReference type="PIR" id="T10473">
    <property type="entry name" value="T10473"/>
</dbReference>
<dbReference type="RefSeq" id="XP_042887187.1">
    <property type="nucleotide sequence ID" value="XM_043031253.1"/>
</dbReference>
<dbReference type="PDB" id="1J0T">
    <property type="method" value="NMR"/>
    <property type="chains" value="A=28-105"/>
</dbReference>
<dbReference type="PDBsum" id="1J0T"/>
<dbReference type="SMR" id="P55847"/>
<dbReference type="EnsemblMetazoa" id="XM_043031253.1">
    <property type="protein sequence ID" value="XP_042887187.1"/>
    <property type="gene ID" value="LOC122262976"/>
</dbReference>
<dbReference type="GeneID" id="122262976"/>
<dbReference type="OrthoDB" id="6331348at2759"/>
<dbReference type="EvolutionaryTrace" id="P55847"/>
<dbReference type="GO" id="GO:0005576">
    <property type="term" value="C:extracellular region"/>
    <property type="evidence" value="ECO:0007669"/>
    <property type="project" value="UniProtKB-SubCell"/>
</dbReference>
<dbReference type="GO" id="GO:0005184">
    <property type="term" value="F:neuropeptide hormone activity"/>
    <property type="evidence" value="ECO:0007669"/>
    <property type="project" value="InterPro"/>
</dbReference>
<dbReference type="GO" id="GO:0007623">
    <property type="term" value="P:circadian rhythm"/>
    <property type="evidence" value="ECO:0007669"/>
    <property type="project" value="TreeGrafter"/>
</dbReference>
<dbReference type="GO" id="GO:0007218">
    <property type="term" value="P:neuropeptide signaling pathway"/>
    <property type="evidence" value="ECO:0007669"/>
    <property type="project" value="UniProtKB-KW"/>
</dbReference>
<dbReference type="Gene3D" id="1.10.2010.10">
    <property type="entry name" value="Crustacean CHH/MIH/GIH neurohormone"/>
    <property type="match status" value="1"/>
</dbReference>
<dbReference type="InterPro" id="IPR018251">
    <property type="entry name" value="Crust_neurhormone_CS"/>
</dbReference>
<dbReference type="InterPro" id="IPR031098">
    <property type="entry name" value="Crust_neurohorm"/>
</dbReference>
<dbReference type="InterPro" id="IPR035957">
    <property type="entry name" value="Crust_neurohorm_sf"/>
</dbReference>
<dbReference type="InterPro" id="IPR001166">
    <property type="entry name" value="Hyperglycemic"/>
</dbReference>
<dbReference type="InterPro" id="IPR001262">
    <property type="entry name" value="Hyperglycemic2"/>
</dbReference>
<dbReference type="PANTHER" id="PTHR35981">
    <property type="entry name" value="ION TRANSPORT PEPTIDE, ISOFORM C"/>
    <property type="match status" value="1"/>
</dbReference>
<dbReference type="PANTHER" id="PTHR35981:SF2">
    <property type="entry name" value="ION TRANSPORT PEPTIDE, ISOFORM C"/>
    <property type="match status" value="1"/>
</dbReference>
<dbReference type="Pfam" id="PF01147">
    <property type="entry name" value="Crust_neurohorm"/>
    <property type="match status" value="1"/>
</dbReference>
<dbReference type="PRINTS" id="PR00549">
    <property type="entry name" value="HYPRGLYCEMC2"/>
</dbReference>
<dbReference type="PRINTS" id="PR00550">
    <property type="entry name" value="HYPRGLYCEMIC"/>
</dbReference>
<dbReference type="SUPFAM" id="SSF81778">
    <property type="entry name" value="Crustacean CHH/MIH/GIH neurohormone"/>
    <property type="match status" value="1"/>
</dbReference>
<dbReference type="PROSITE" id="PS01250">
    <property type="entry name" value="CHH_MIH_GIH"/>
    <property type="match status" value="1"/>
</dbReference>
<accession>P55847</accession>
<accession>O02379</accession>
<proteinExistence type="evidence at protein level"/>
<protein>
    <recommendedName>
        <fullName>Molt-inhibiting hormone</fullName>
        <shortName>MIH</shortName>
    </recommendedName>
    <alternativeName>
        <fullName>PeJ-SGP-IV</fullName>
    </alternativeName>
</protein>
<reference key="1">
    <citation type="journal article" date="1997" name="Zool. Sci.">
        <title>Molecular cloning of a molt-inhibiting hormone cDNA from the kuruma prawn Penaeus japonicus.</title>
        <authorList>
            <person name="Ohira T."/>
            <person name="Watanabe T."/>
            <person name="Nagasawa H."/>
            <person name="Aida K."/>
        </authorList>
    </citation>
    <scope>NUCLEOTIDE SEQUENCE [MRNA]</scope>
    <source>
        <tissue>Eyestalk</tissue>
    </source>
</reference>
<reference key="2">
    <citation type="journal article" date="1996" name="Peptides">
        <title>Amino acid sequence of a peptide with molt-inhibiting activity from the kuruma prawn Penaeus japonicus.</title>
        <authorList>
            <person name="Yang W.-J."/>
            <person name="Aida K."/>
            <person name="Terauchi A."/>
            <person name="Sonobe H."/>
            <person name="Nagasawa H."/>
        </authorList>
    </citation>
    <scope>PROTEIN SEQUENCE OF 29-105</scope>
    <source>
        <tissue>Sinus gland</tissue>
    </source>
</reference>
<reference key="3">
    <citation type="journal article" date="2003" name="J. Biol. Chem.">
        <title>The solution structure of molt-inhibiting hormone from the Kuruma prawn Marsupenaeus japonicus.</title>
        <authorList>
            <person name="Katayama H."/>
            <person name="Nagata K."/>
            <person name="Ohira T."/>
            <person name="Yumoto F."/>
            <person name="Tanokura M."/>
            <person name="Nagasawa H."/>
        </authorList>
    </citation>
    <scope>STRUCTURE BY NMR OF 28-105</scope>
    <scope>DISULFIDE BONDS</scope>
</reference>
<feature type="signal peptide" evidence="2">
    <location>
        <begin position="1"/>
        <end position="28"/>
    </location>
</feature>
<feature type="peptide" id="PRO_0000019081" description="Molt-inhibiting hormone">
    <location>
        <begin position="29"/>
        <end position="105"/>
    </location>
</feature>
<feature type="disulfide bond" evidence="1">
    <location>
        <begin position="35"/>
        <end position="72"/>
    </location>
</feature>
<feature type="disulfide bond" evidence="1">
    <location>
        <begin position="52"/>
        <end position="68"/>
    </location>
</feature>
<feature type="disulfide bond" evidence="1">
    <location>
        <begin position="55"/>
        <end position="81"/>
    </location>
</feature>
<feature type="sequence conflict" description="In Ref. 2; AA sequence." evidence="3" ref="2">
    <original>IY</original>
    <variation>YN</variation>
    <location>
        <begin position="44"/>
        <end position="45"/>
    </location>
</feature>
<feature type="strand" evidence="4">
    <location>
        <begin position="31"/>
        <end position="33"/>
    </location>
</feature>
<feature type="turn" evidence="4">
    <location>
        <begin position="38"/>
        <end position="40"/>
    </location>
</feature>
<feature type="helix" evidence="4">
    <location>
        <begin position="44"/>
        <end position="59"/>
    </location>
</feature>
<feature type="turn" evidence="4">
    <location>
        <begin position="62"/>
        <end position="64"/>
    </location>
</feature>
<feature type="helix" evidence="4">
    <location>
        <begin position="65"/>
        <end position="68"/>
    </location>
</feature>
<feature type="helix" evidence="4">
    <location>
        <begin position="77"/>
        <end position="83"/>
    </location>
</feature>
<feature type="helix" evidence="4">
    <location>
        <begin position="91"/>
        <end position="100"/>
    </location>
</feature>
<evidence type="ECO:0000269" key="1">
    <source>
    </source>
</evidence>
<evidence type="ECO:0000269" key="2">
    <source>
    </source>
</evidence>
<evidence type="ECO:0000305" key="3"/>
<evidence type="ECO:0007829" key="4">
    <source>
        <dbReference type="PDB" id="1J0T"/>
    </source>
</evidence>
<sequence length="105" mass="12150">MYRLAMRTWLAIVIVVVGTSLLFDTASASFIDNTCRGVMGNRDIYKKVVRVCEDCTNIFRLPGLDGMCRNRCFYNEWFLICLKAANREDEIEKFRVWISILNAGQ</sequence>
<keyword id="KW-0002">3D-structure</keyword>
<keyword id="KW-0903">Direct protein sequencing</keyword>
<keyword id="KW-1015">Disulfide bond</keyword>
<keyword id="KW-0372">Hormone</keyword>
<keyword id="KW-0527">Neuropeptide</keyword>
<keyword id="KW-0964">Secreted</keyword>
<keyword id="KW-0732">Signal</keyword>
<comment type="function">
    <text>Inhibits Y-organs where molting hormone (ecdysteroid) is secreted. A molting cycle is initiated when MIH secretion diminishes or stops. Has little or no hyperglycemic activity.</text>
</comment>
<comment type="subcellular location">
    <subcellularLocation>
        <location>Secreted</location>
    </subcellularLocation>
</comment>
<comment type="tissue specificity">
    <text>Produced by the medulla terminalis X-organ in the eyestalks and transported to the sinus gland where it is stored and released.</text>
</comment>
<comment type="similarity">
    <text evidence="3">Belongs to the arthropod CHH/MIH/GIH/VIH hormone family.</text>
</comment>
<organism>
    <name type="scientific">Penaeus japonicus</name>
    <name type="common">Kuruma prawn</name>
    <name type="synonym">Marsupenaeus japonicus</name>
    <dbReference type="NCBI Taxonomy" id="27405"/>
    <lineage>
        <taxon>Eukaryota</taxon>
        <taxon>Metazoa</taxon>
        <taxon>Ecdysozoa</taxon>
        <taxon>Arthropoda</taxon>
        <taxon>Crustacea</taxon>
        <taxon>Multicrustacea</taxon>
        <taxon>Malacostraca</taxon>
        <taxon>Eumalacostraca</taxon>
        <taxon>Eucarida</taxon>
        <taxon>Decapoda</taxon>
        <taxon>Dendrobranchiata</taxon>
        <taxon>Penaeoidea</taxon>
        <taxon>Penaeidae</taxon>
        <taxon>Penaeus</taxon>
    </lineage>
</organism>